<reference key="1">
    <citation type="journal article" date="1991" name="Curr. Genet.">
        <title>Homology between mitochondrial DNA of Agaricus bisporus and an internal portion of a linear mitochondrial plasmid of Agaricus bitorquis.</title>
        <authorList>
            <person name="Robison M.M."/>
            <person name="Royer J.C."/>
            <person name="Horgen P.A."/>
        </authorList>
    </citation>
    <scope>NUCLEOTIDE SEQUENCE [GENOMIC DNA]</scope>
    <source>
        <strain>ATCC 24666 / Ag4 / CBS 507.73</strain>
    </source>
</reference>
<sequence length="797" mass="91922">EFPKYDSITELDVYCNQNNKSDVQMYNFITKLESEYGNITVTVYKGSKTISNDKSILNECELYFVFNIGSNKRVVCLADNKTWDQSLKYWNSSKYPYPRWCDEYLTESEFVRSIGEYKFHVNNGTVKYWEKYYNFPDMVFNYSDKKHDLRIGSLDLETYGDNCFELGLGNLNVYAGGFALNDGFKKLYYLNNDTELNSGEAIIKKMFGDLFDYIAEDRKARNNYTIYAHNLGRFDSVFIIRSLCSEGYKINGQWIDNSILYLKIVDSTRKLTIKLRDSIKLVPHSLDKALSSNGCNISKGMFPHKFVNKDTLNYIGDKPDIKYYVDENKFNESKLKKYKSLPSILNLKKECLNYLDKDILGLLELMNKVSLTYFNEYKLNITKFSTLPSITLNIFGIRFYDDQNSIKMINGPLSEFIRSSYFGGNSDIFVSGEERLVKNGYHYDMNSQYPYAMLQSMPTGNPVFSTNTDLNYYRNGFVFARVTPPSKDTLVNLFIPRRSDDGSVICDRNTFYEFIPTPDLKQGLEYGYKFEVICGINFPDACGNGELFSEFVNHFYEIKSSSTDLGQKYIAKLSLNSLYGKFGQKEREYSIRLLEKDKAKEIISKNHYSYMSEVSDNYTLIKSGGRLNSKLRRLYAEQARINTINDDLLSSKFIKSRGIPSAVQISAMISSYARTSINPFKNIPGNLAIASNTDSLILRKPLEDHLIGKEIGKWKLEHKFKNGVFVKPKLYCYEDVDINELIRKASGVTASNLTYENFVELVNGKDVLTNKELFRLNWETLNIEIVNINTKISGIKE</sequence>
<name>DPOM_AGABT</name>
<protein>
    <recommendedName>
        <fullName>Probable DNA polymerase</fullName>
        <ecNumber>2.7.7.7</ecNumber>
    </recommendedName>
</protein>
<organism>
    <name type="scientific">Agaricus bitorquis</name>
    <name type="common">Pavement mushroom</name>
    <name type="synonym">Psalliota bitorquis</name>
    <dbReference type="NCBI Taxonomy" id="5343"/>
    <lineage>
        <taxon>Eukaryota</taxon>
        <taxon>Fungi</taxon>
        <taxon>Dikarya</taxon>
        <taxon>Basidiomycota</taxon>
        <taxon>Agaricomycotina</taxon>
        <taxon>Agaricomycetes</taxon>
        <taxon>Agaricomycetidae</taxon>
        <taxon>Agaricales</taxon>
        <taxon>Agaricineae</taxon>
        <taxon>Agaricaceae</taxon>
        <taxon>Agaricus</taxon>
    </lineage>
</organism>
<proteinExistence type="inferred from homology"/>
<accession>P30322</accession>
<dbReference type="EC" id="2.7.7.7"/>
<dbReference type="EMBL" id="X63075">
    <property type="protein sequence ID" value="CAA44800.1"/>
    <property type="molecule type" value="Genomic_DNA"/>
</dbReference>
<dbReference type="PIR" id="S28103">
    <property type="entry name" value="S28103"/>
</dbReference>
<dbReference type="GO" id="GO:0005739">
    <property type="term" value="C:mitochondrion"/>
    <property type="evidence" value="ECO:0007669"/>
    <property type="project" value="UniProtKB-SubCell"/>
</dbReference>
<dbReference type="GO" id="GO:0003677">
    <property type="term" value="F:DNA binding"/>
    <property type="evidence" value="ECO:0007669"/>
    <property type="project" value="UniProtKB-KW"/>
</dbReference>
<dbReference type="GO" id="GO:0003887">
    <property type="term" value="F:DNA-directed DNA polymerase activity"/>
    <property type="evidence" value="ECO:0007669"/>
    <property type="project" value="UniProtKB-KW"/>
</dbReference>
<dbReference type="GO" id="GO:0000166">
    <property type="term" value="F:nucleotide binding"/>
    <property type="evidence" value="ECO:0007669"/>
    <property type="project" value="InterPro"/>
</dbReference>
<dbReference type="GO" id="GO:0006260">
    <property type="term" value="P:DNA replication"/>
    <property type="evidence" value="ECO:0007669"/>
    <property type="project" value="UniProtKB-KW"/>
</dbReference>
<dbReference type="Gene3D" id="1.10.287.690">
    <property type="entry name" value="Helix hairpin bin"/>
    <property type="match status" value="1"/>
</dbReference>
<dbReference type="Gene3D" id="3.90.1600.10">
    <property type="entry name" value="Palm domain of DNA polymerase"/>
    <property type="match status" value="2"/>
</dbReference>
<dbReference type="Gene3D" id="3.30.420.10">
    <property type="entry name" value="Ribonuclease H-like superfamily/Ribonuclease H"/>
    <property type="match status" value="1"/>
</dbReference>
<dbReference type="InterPro" id="IPR006172">
    <property type="entry name" value="DNA-dir_DNA_pol_B"/>
</dbReference>
<dbReference type="InterPro" id="IPR004868">
    <property type="entry name" value="DNA-dir_DNA_pol_B_mt/vir"/>
</dbReference>
<dbReference type="InterPro" id="IPR043502">
    <property type="entry name" value="DNA/RNA_pol_sf"/>
</dbReference>
<dbReference type="InterPro" id="IPR023211">
    <property type="entry name" value="DNA_pol_palm_dom_sf"/>
</dbReference>
<dbReference type="InterPro" id="IPR012337">
    <property type="entry name" value="RNaseH-like_sf"/>
</dbReference>
<dbReference type="InterPro" id="IPR036397">
    <property type="entry name" value="RNaseH_sf"/>
</dbReference>
<dbReference type="PANTHER" id="PTHR33568">
    <property type="entry name" value="DNA POLYMERASE"/>
    <property type="match status" value="1"/>
</dbReference>
<dbReference type="PANTHER" id="PTHR33568:SF3">
    <property type="entry name" value="DNA-DIRECTED DNA POLYMERASE"/>
    <property type="match status" value="1"/>
</dbReference>
<dbReference type="Pfam" id="PF03175">
    <property type="entry name" value="DNA_pol_B_2"/>
    <property type="match status" value="1"/>
</dbReference>
<dbReference type="SMART" id="SM00486">
    <property type="entry name" value="POLBc"/>
    <property type="match status" value="1"/>
</dbReference>
<dbReference type="SUPFAM" id="SSF56672">
    <property type="entry name" value="DNA/RNA polymerases"/>
    <property type="match status" value="1"/>
</dbReference>
<dbReference type="SUPFAM" id="SSF53098">
    <property type="entry name" value="Ribonuclease H-like"/>
    <property type="match status" value="1"/>
</dbReference>
<geneLocation type="mitochondrion"/>
<geneLocation type="plasmid">
    <name>pEM</name>
</geneLocation>
<keyword id="KW-0235">DNA replication</keyword>
<keyword id="KW-0238">DNA-binding</keyword>
<keyword id="KW-0239">DNA-directed DNA polymerase</keyword>
<keyword id="KW-0496">Mitochondrion</keyword>
<keyword id="KW-0548">Nucleotidyltransferase</keyword>
<keyword id="KW-0614">Plasmid</keyword>
<keyword id="KW-0808">Transferase</keyword>
<evidence type="ECO:0000250" key="1"/>
<evidence type="ECO:0000305" key="2"/>
<feature type="chain" id="PRO_0000046550" description="Probable DNA polymerase">
    <location>
        <begin position="1" status="less than"/>
        <end position="797"/>
    </location>
</feature>
<feature type="non-terminal residue">
    <location>
        <position position="1"/>
    </location>
</feature>
<comment type="catalytic activity">
    <reaction>
        <text>DNA(n) + a 2'-deoxyribonucleoside 5'-triphosphate = DNA(n+1) + diphosphate</text>
        <dbReference type="Rhea" id="RHEA:22508"/>
        <dbReference type="Rhea" id="RHEA-COMP:17339"/>
        <dbReference type="Rhea" id="RHEA-COMP:17340"/>
        <dbReference type="ChEBI" id="CHEBI:33019"/>
        <dbReference type="ChEBI" id="CHEBI:61560"/>
        <dbReference type="ChEBI" id="CHEBI:173112"/>
        <dbReference type="EC" id="2.7.7.7"/>
    </reaction>
</comment>
<comment type="subcellular location">
    <subcellularLocation>
        <location evidence="2">Mitochondrion</location>
    </subcellularLocation>
</comment>
<comment type="miscellaneous">
    <text evidence="1">This DNA polymerase requires a protein as a primer.</text>
</comment>
<comment type="similarity">
    <text evidence="2">Belongs to the DNA polymerase type-B family.</text>
</comment>